<protein>
    <recommendedName>
        <fullName evidence="1">Small ribosomal subunit protein uS19</fullName>
    </recommendedName>
    <alternativeName>
        <fullName evidence="2">30S ribosomal protein S19</fullName>
    </alternativeName>
</protein>
<comment type="function">
    <text evidence="1">Protein S19 forms a complex with S13 that binds strongly to the 16S ribosomal RNA.</text>
</comment>
<comment type="similarity">
    <text evidence="1">Belongs to the universal ribosomal protein uS19 family.</text>
</comment>
<keyword id="KW-0687">Ribonucleoprotein</keyword>
<keyword id="KW-0689">Ribosomal protein</keyword>
<keyword id="KW-0694">RNA-binding</keyword>
<keyword id="KW-0699">rRNA-binding</keyword>
<gene>
    <name evidence="1" type="primary">rpsS</name>
    <name type="ordered locus">SPJ_0223</name>
</gene>
<feature type="chain" id="PRO_1000146417" description="Small ribosomal subunit protein uS19">
    <location>
        <begin position="1"/>
        <end position="93"/>
    </location>
</feature>
<accession>C1CC10</accession>
<name>RS19_STRZJ</name>
<sequence length="93" mass="10750">MGRSLKKGPFVDEHLMKKVEAQANDEKKKVIKTWSRRSTIFPSFIGYTIAVYDGRKHVPVYIQEDMVGHKLGEFAPTRTYKGHAADDKKTRRK</sequence>
<evidence type="ECO:0000255" key="1">
    <source>
        <dbReference type="HAMAP-Rule" id="MF_00531"/>
    </source>
</evidence>
<evidence type="ECO:0000305" key="2"/>
<proteinExistence type="inferred from homology"/>
<organism>
    <name type="scientific">Streptococcus pneumoniae (strain JJA)</name>
    <dbReference type="NCBI Taxonomy" id="488222"/>
    <lineage>
        <taxon>Bacteria</taxon>
        <taxon>Bacillati</taxon>
        <taxon>Bacillota</taxon>
        <taxon>Bacilli</taxon>
        <taxon>Lactobacillales</taxon>
        <taxon>Streptococcaceae</taxon>
        <taxon>Streptococcus</taxon>
    </lineage>
</organism>
<dbReference type="EMBL" id="CP000919">
    <property type="protein sequence ID" value="ACO19039.1"/>
    <property type="molecule type" value="Genomic_DNA"/>
</dbReference>
<dbReference type="RefSeq" id="WP_000533766.1">
    <property type="nucleotide sequence ID" value="NC_012466.1"/>
</dbReference>
<dbReference type="SMR" id="C1CC10"/>
<dbReference type="GeneID" id="93920908"/>
<dbReference type="KEGG" id="sjj:SPJ_0223"/>
<dbReference type="HOGENOM" id="CLU_144911_0_1_9"/>
<dbReference type="Proteomes" id="UP000002206">
    <property type="component" value="Chromosome"/>
</dbReference>
<dbReference type="GO" id="GO:0005737">
    <property type="term" value="C:cytoplasm"/>
    <property type="evidence" value="ECO:0007669"/>
    <property type="project" value="UniProtKB-ARBA"/>
</dbReference>
<dbReference type="GO" id="GO:0015935">
    <property type="term" value="C:small ribosomal subunit"/>
    <property type="evidence" value="ECO:0007669"/>
    <property type="project" value="InterPro"/>
</dbReference>
<dbReference type="GO" id="GO:0019843">
    <property type="term" value="F:rRNA binding"/>
    <property type="evidence" value="ECO:0007669"/>
    <property type="project" value="UniProtKB-UniRule"/>
</dbReference>
<dbReference type="GO" id="GO:0003735">
    <property type="term" value="F:structural constituent of ribosome"/>
    <property type="evidence" value="ECO:0007669"/>
    <property type="project" value="InterPro"/>
</dbReference>
<dbReference type="GO" id="GO:0000028">
    <property type="term" value="P:ribosomal small subunit assembly"/>
    <property type="evidence" value="ECO:0007669"/>
    <property type="project" value="TreeGrafter"/>
</dbReference>
<dbReference type="GO" id="GO:0006412">
    <property type="term" value="P:translation"/>
    <property type="evidence" value="ECO:0007669"/>
    <property type="project" value="UniProtKB-UniRule"/>
</dbReference>
<dbReference type="FunFam" id="3.30.860.10:FF:000001">
    <property type="entry name" value="30S ribosomal protein S19"/>
    <property type="match status" value="1"/>
</dbReference>
<dbReference type="Gene3D" id="3.30.860.10">
    <property type="entry name" value="30s Ribosomal Protein S19, Chain A"/>
    <property type="match status" value="1"/>
</dbReference>
<dbReference type="HAMAP" id="MF_00531">
    <property type="entry name" value="Ribosomal_uS19"/>
    <property type="match status" value="1"/>
</dbReference>
<dbReference type="InterPro" id="IPR002222">
    <property type="entry name" value="Ribosomal_uS19"/>
</dbReference>
<dbReference type="InterPro" id="IPR005732">
    <property type="entry name" value="Ribosomal_uS19_bac-type"/>
</dbReference>
<dbReference type="InterPro" id="IPR020934">
    <property type="entry name" value="Ribosomal_uS19_CS"/>
</dbReference>
<dbReference type="InterPro" id="IPR023575">
    <property type="entry name" value="Ribosomal_uS19_SF"/>
</dbReference>
<dbReference type="NCBIfam" id="TIGR01050">
    <property type="entry name" value="rpsS_bact"/>
    <property type="match status" value="1"/>
</dbReference>
<dbReference type="PANTHER" id="PTHR11880">
    <property type="entry name" value="RIBOSOMAL PROTEIN S19P FAMILY MEMBER"/>
    <property type="match status" value="1"/>
</dbReference>
<dbReference type="PANTHER" id="PTHR11880:SF8">
    <property type="entry name" value="SMALL RIBOSOMAL SUBUNIT PROTEIN US19M"/>
    <property type="match status" value="1"/>
</dbReference>
<dbReference type="Pfam" id="PF00203">
    <property type="entry name" value="Ribosomal_S19"/>
    <property type="match status" value="1"/>
</dbReference>
<dbReference type="PIRSF" id="PIRSF002144">
    <property type="entry name" value="Ribosomal_S19"/>
    <property type="match status" value="1"/>
</dbReference>
<dbReference type="PRINTS" id="PR00975">
    <property type="entry name" value="RIBOSOMALS19"/>
</dbReference>
<dbReference type="SUPFAM" id="SSF54570">
    <property type="entry name" value="Ribosomal protein S19"/>
    <property type="match status" value="1"/>
</dbReference>
<dbReference type="PROSITE" id="PS00323">
    <property type="entry name" value="RIBOSOMAL_S19"/>
    <property type="match status" value="1"/>
</dbReference>
<reference key="1">
    <citation type="journal article" date="2010" name="Genome Biol.">
        <title>Structure and dynamics of the pan-genome of Streptococcus pneumoniae and closely related species.</title>
        <authorList>
            <person name="Donati C."/>
            <person name="Hiller N.L."/>
            <person name="Tettelin H."/>
            <person name="Muzzi A."/>
            <person name="Croucher N.J."/>
            <person name="Angiuoli S.V."/>
            <person name="Oggioni M."/>
            <person name="Dunning Hotopp J.C."/>
            <person name="Hu F.Z."/>
            <person name="Riley D.R."/>
            <person name="Covacci A."/>
            <person name="Mitchell T.J."/>
            <person name="Bentley S.D."/>
            <person name="Kilian M."/>
            <person name="Ehrlich G.D."/>
            <person name="Rappuoli R."/>
            <person name="Moxon E.R."/>
            <person name="Masignani V."/>
        </authorList>
    </citation>
    <scope>NUCLEOTIDE SEQUENCE [LARGE SCALE GENOMIC DNA]</scope>
    <source>
        <strain>JJA</strain>
    </source>
</reference>